<evidence type="ECO:0000255" key="1">
    <source>
        <dbReference type="HAMAP-Rule" id="MF_00049"/>
    </source>
</evidence>
<reference key="1">
    <citation type="journal article" date="2004" name="Proc. Natl. Acad. Sci. U.S.A.">
        <title>The louse-borne human pathogen Bartonella quintana is a genomic derivative of the zoonotic agent Bartonella henselae.</title>
        <authorList>
            <person name="Alsmark U.C.M."/>
            <person name="Frank A.C."/>
            <person name="Karlberg E.O."/>
            <person name="Legault B.-A."/>
            <person name="Ardell D.H."/>
            <person name="Canbaeck B."/>
            <person name="Eriksson A.-S."/>
            <person name="Naeslund A.K."/>
            <person name="Handley S.A."/>
            <person name="Huvet M."/>
            <person name="La Scola B."/>
            <person name="Holmberg M."/>
            <person name="Andersson S.G.E."/>
        </authorList>
    </citation>
    <scope>NUCLEOTIDE SEQUENCE [LARGE SCALE GENOMIC DNA]</scope>
    <source>
        <strain>ATCC 49882 / DSM 28221 / CCUG 30454 / Houston 1</strain>
    </source>
</reference>
<feature type="chain" id="PRO_0000151975" description="Leucine--tRNA ligase">
    <location>
        <begin position="1"/>
        <end position="880"/>
    </location>
</feature>
<feature type="short sequence motif" description="'HIGH' region">
    <location>
        <begin position="49"/>
        <end position="59"/>
    </location>
</feature>
<feature type="short sequence motif" description="'KMSKS' region">
    <location>
        <begin position="638"/>
        <end position="642"/>
    </location>
</feature>
<feature type="binding site" evidence="1">
    <location>
        <position position="641"/>
    </location>
    <ligand>
        <name>ATP</name>
        <dbReference type="ChEBI" id="CHEBI:30616"/>
    </ligand>
</feature>
<keyword id="KW-0030">Aminoacyl-tRNA synthetase</keyword>
<keyword id="KW-0067">ATP-binding</keyword>
<keyword id="KW-0963">Cytoplasm</keyword>
<keyword id="KW-0436">Ligase</keyword>
<keyword id="KW-0547">Nucleotide-binding</keyword>
<keyword id="KW-0648">Protein biosynthesis</keyword>
<gene>
    <name evidence="1" type="primary">leuS</name>
    <name type="ordered locus">BH15390</name>
</gene>
<protein>
    <recommendedName>
        <fullName evidence="1">Leucine--tRNA ligase</fullName>
        <ecNumber evidence="1">6.1.1.4</ecNumber>
    </recommendedName>
    <alternativeName>
        <fullName evidence="1">Leucyl-tRNA synthetase</fullName>
        <shortName evidence="1">LeuRS</shortName>
    </alternativeName>
</protein>
<sequence length="880" mass="100077">MTIEHYNLGERYNPRACERKWQAIWDEKKTFQTVQEDRREKYYVLEMFPYPSGRIHMGHVRNYAMGDVVARYKRAKGFNVLHPMGWDAFGMPAENAAMQNKVHPKTWTYQNIAVMRGQLKQLGLSVDWSREFATCDVDYYHRQQMLFLDFYQKGLVARKVAKVNWDPVDQTVLANEQVVDGRGWRSGALVEQRELTQWFFKISDFSEDLLAGLEELEQWPEKVRIMQKNWIGKSQGLLIRWALKSTEEADEVCKSFDEVVCYSTRPDTLFGASFLALSVDHPLAQALAQKDKALEFFIENCRSGGTTTAELETAEKQGFRTSLVAVHPFDVAVHIPVYIANFVLMDYGTGAVFGCPAHDQRDFDFARKYDLPVQPVVLPSGVEREDFAITETPYLGDGVMINSSFLDGLTPQQAFEEAAKRLEGQMLNGKPQAEKTVQFRLRDWGISRQRYWGCPIPMIHCTSCGVVPVPRADLPVVLPDDVTFEQPGNPLVCHETWKSVACPVCGQFAKRETDTMDTFVDSSWYYARFTAPFAQEPVDKKATTEWLPVQQYIGGIEHAILHLLYARFFTRAMKSMGYVTVDEPFKGLFTQGMVVHETYRDEKDWVSPEEISIVEKDGKRQAYKLTDQSEVTIGSIEKMSKSKKNVVDPDDIIASYGADTVRWFILSDSPPERDVIWTESGVEGAHRFVQRVWRCVALSAPVLRDVVPCVGKQGAALQLSKVAHRTLYAVEDDLEKFAFNRAIARLYEFLNIMAPLLNRIENVEDEMKAALRQAMDFFLAMIAPIMPHLAEECHAALGEKTLISELAWPVCDRALTVEECYTLPVQINGKKRGEVTVAATASEAMIEEAVLALDFVKVHLVKKPVKKMIIVPKRIVNVVL</sequence>
<comment type="catalytic activity">
    <reaction evidence="1">
        <text>tRNA(Leu) + L-leucine + ATP = L-leucyl-tRNA(Leu) + AMP + diphosphate</text>
        <dbReference type="Rhea" id="RHEA:11688"/>
        <dbReference type="Rhea" id="RHEA-COMP:9613"/>
        <dbReference type="Rhea" id="RHEA-COMP:9622"/>
        <dbReference type="ChEBI" id="CHEBI:30616"/>
        <dbReference type="ChEBI" id="CHEBI:33019"/>
        <dbReference type="ChEBI" id="CHEBI:57427"/>
        <dbReference type="ChEBI" id="CHEBI:78442"/>
        <dbReference type="ChEBI" id="CHEBI:78494"/>
        <dbReference type="ChEBI" id="CHEBI:456215"/>
        <dbReference type="EC" id="6.1.1.4"/>
    </reaction>
</comment>
<comment type="subcellular location">
    <subcellularLocation>
        <location evidence="1">Cytoplasm</location>
    </subcellularLocation>
</comment>
<comment type="similarity">
    <text evidence="1">Belongs to the class-I aminoacyl-tRNA synthetase family.</text>
</comment>
<proteinExistence type="inferred from homology"/>
<organism>
    <name type="scientific">Bartonella henselae (strain ATCC 49882 / DSM 28221 / CCUG 30454 / Houston 1)</name>
    <name type="common">Rochalimaea henselae</name>
    <dbReference type="NCBI Taxonomy" id="283166"/>
    <lineage>
        <taxon>Bacteria</taxon>
        <taxon>Pseudomonadati</taxon>
        <taxon>Pseudomonadota</taxon>
        <taxon>Alphaproteobacteria</taxon>
        <taxon>Hyphomicrobiales</taxon>
        <taxon>Bartonellaceae</taxon>
        <taxon>Bartonella</taxon>
    </lineage>
</organism>
<name>SYL_BARHE</name>
<dbReference type="EC" id="6.1.1.4" evidence="1"/>
<dbReference type="EMBL" id="BX897699">
    <property type="protein sequence ID" value="CAF28302.1"/>
    <property type="molecule type" value="Genomic_DNA"/>
</dbReference>
<dbReference type="RefSeq" id="WP_011181305.1">
    <property type="nucleotide sequence ID" value="NZ_LRIJ02000001.1"/>
</dbReference>
<dbReference type="SMR" id="Q6G1W2"/>
<dbReference type="PaxDb" id="283166-BH15390"/>
<dbReference type="EnsemblBacteria" id="CAF28302">
    <property type="protein sequence ID" value="CAF28302"/>
    <property type="gene ID" value="BH15390"/>
</dbReference>
<dbReference type="GeneID" id="92986160"/>
<dbReference type="KEGG" id="bhe:BH15390"/>
<dbReference type="eggNOG" id="COG0495">
    <property type="taxonomic scope" value="Bacteria"/>
</dbReference>
<dbReference type="OrthoDB" id="9810365at2"/>
<dbReference type="Proteomes" id="UP000000421">
    <property type="component" value="Chromosome"/>
</dbReference>
<dbReference type="GO" id="GO:0005829">
    <property type="term" value="C:cytosol"/>
    <property type="evidence" value="ECO:0007669"/>
    <property type="project" value="TreeGrafter"/>
</dbReference>
<dbReference type="GO" id="GO:0002161">
    <property type="term" value="F:aminoacyl-tRNA deacylase activity"/>
    <property type="evidence" value="ECO:0007669"/>
    <property type="project" value="InterPro"/>
</dbReference>
<dbReference type="GO" id="GO:0005524">
    <property type="term" value="F:ATP binding"/>
    <property type="evidence" value="ECO:0007669"/>
    <property type="project" value="UniProtKB-UniRule"/>
</dbReference>
<dbReference type="GO" id="GO:0004823">
    <property type="term" value="F:leucine-tRNA ligase activity"/>
    <property type="evidence" value="ECO:0007669"/>
    <property type="project" value="UniProtKB-UniRule"/>
</dbReference>
<dbReference type="GO" id="GO:0006429">
    <property type="term" value="P:leucyl-tRNA aminoacylation"/>
    <property type="evidence" value="ECO:0007669"/>
    <property type="project" value="UniProtKB-UniRule"/>
</dbReference>
<dbReference type="CDD" id="cd07958">
    <property type="entry name" value="Anticodon_Ia_Leu_BEm"/>
    <property type="match status" value="1"/>
</dbReference>
<dbReference type="CDD" id="cd00812">
    <property type="entry name" value="LeuRS_core"/>
    <property type="match status" value="1"/>
</dbReference>
<dbReference type="FunFam" id="1.10.730.10:FF:000002">
    <property type="entry name" value="Leucine--tRNA ligase"/>
    <property type="match status" value="1"/>
</dbReference>
<dbReference type="FunFam" id="3.40.50.620:FF:000003">
    <property type="entry name" value="Leucine--tRNA ligase"/>
    <property type="match status" value="1"/>
</dbReference>
<dbReference type="Gene3D" id="2.20.28.290">
    <property type="match status" value="1"/>
</dbReference>
<dbReference type="Gene3D" id="3.10.20.590">
    <property type="match status" value="1"/>
</dbReference>
<dbReference type="Gene3D" id="3.40.50.620">
    <property type="entry name" value="HUPs"/>
    <property type="match status" value="2"/>
</dbReference>
<dbReference type="Gene3D" id="1.10.730.10">
    <property type="entry name" value="Isoleucyl-tRNA Synthetase, Domain 1"/>
    <property type="match status" value="1"/>
</dbReference>
<dbReference type="HAMAP" id="MF_00049_B">
    <property type="entry name" value="Leu_tRNA_synth_B"/>
    <property type="match status" value="1"/>
</dbReference>
<dbReference type="InterPro" id="IPR001412">
    <property type="entry name" value="aa-tRNA-synth_I_CS"/>
</dbReference>
<dbReference type="InterPro" id="IPR002300">
    <property type="entry name" value="aa-tRNA-synth_Ia"/>
</dbReference>
<dbReference type="InterPro" id="IPR002302">
    <property type="entry name" value="Leu-tRNA-ligase"/>
</dbReference>
<dbReference type="InterPro" id="IPR025709">
    <property type="entry name" value="Leu_tRNA-synth_edit"/>
</dbReference>
<dbReference type="InterPro" id="IPR013155">
    <property type="entry name" value="M/V/L/I-tRNA-synth_anticd-bd"/>
</dbReference>
<dbReference type="InterPro" id="IPR015413">
    <property type="entry name" value="Methionyl/Leucyl_tRNA_Synth"/>
</dbReference>
<dbReference type="InterPro" id="IPR014729">
    <property type="entry name" value="Rossmann-like_a/b/a_fold"/>
</dbReference>
<dbReference type="InterPro" id="IPR009080">
    <property type="entry name" value="tRNAsynth_Ia_anticodon-bd"/>
</dbReference>
<dbReference type="InterPro" id="IPR009008">
    <property type="entry name" value="Val/Leu/Ile-tRNA-synth_edit"/>
</dbReference>
<dbReference type="NCBIfam" id="TIGR00396">
    <property type="entry name" value="leuS_bact"/>
    <property type="match status" value="1"/>
</dbReference>
<dbReference type="PANTHER" id="PTHR43740:SF2">
    <property type="entry name" value="LEUCINE--TRNA LIGASE, MITOCHONDRIAL"/>
    <property type="match status" value="1"/>
</dbReference>
<dbReference type="PANTHER" id="PTHR43740">
    <property type="entry name" value="LEUCYL-TRNA SYNTHETASE"/>
    <property type="match status" value="1"/>
</dbReference>
<dbReference type="Pfam" id="PF08264">
    <property type="entry name" value="Anticodon_1"/>
    <property type="match status" value="1"/>
</dbReference>
<dbReference type="Pfam" id="PF00133">
    <property type="entry name" value="tRNA-synt_1"/>
    <property type="match status" value="2"/>
</dbReference>
<dbReference type="Pfam" id="PF13603">
    <property type="entry name" value="tRNA-synt_1_2"/>
    <property type="match status" value="1"/>
</dbReference>
<dbReference type="Pfam" id="PF09334">
    <property type="entry name" value="tRNA-synt_1g"/>
    <property type="match status" value="1"/>
</dbReference>
<dbReference type="PRINTS" id="PR00985">
    <property type="entry name" value="TRNASYNTHLEU"/>
</dbReference>
<dbReference type="SUPFAM" id="SSF47323">
    <property type="entry name" value="Anticodon-binding domain of a subclass of class I aminoacyl-tRNA synthetases"/>
    <property type="match status" value="1"/>
</dbReference>
<dbReference type="SUPFAM" id="SSF52374">
    <property type="entry name" value="Nucleotidylyl transferase"/>
    <property type="match status" value="1"/>
</dbReference>
<dbReference type="SUPFAM" id="SSF50677">
    <property type="entry name" value="ValRS/IleRS/LeuRS editing domain"/>
    <property type="match status" value="1"/>
</dbReference>
<dbReference type="PROSITE" id="PS00178">
    <property type="entry name" value="AA_TRNA_LIGASE_I"/>
    <property type="match status" value="1"/>
</dbReference>
<accession>Q6G1W2</accession>